<accession>A0ALU5</accession>
<feature type="chain" id="PRO_0000302233" description="Large ribosomal subunit protein bL36">
    <location>
        <begin position="1"/>
        <end position="37"/>
    </location>
</feature>
<evidence type="ECO:0000255" key="1">
    <source>
        <dbReference type="HAMAP-Rule" id="MF_00251"/>
    </source>
</evidence>
<evidence type="ECO:0000305" key="2"/>
<reference key="1">
    <citation type="journal article" date="2006" name="J. Bacteriol.">
        <title>Whole-genome sequence of Listeria welshimeri reveals common steps in genome reduction with Listeria innocua as compared to Listeria monocytogenes.</title>
        <authorList>
            <person name="Hain T."/>
            <person name="Steinweg C."/>
            <person name="Kuenne C.T."/>
            <person name="Billion A."/>
            <person name="Ghai R."/>
            <person name="Chatterjee S.S."/>
            <person name="Domann E."/>
            <person name="Kaerst U."/>
            <person name="Goesmann A."/>
            <person name="Bekel T."/>
            <person name="Bartels D."/>
            <person name="Kaiser O."/>
            <person name="Meyer F."/>
            <person name="Puehler A."/>
            <person name="Weisshaar B."/>
            <person name="Wehland J."/>
            <person name="Liang C."/>
            <person name="Dandekar T."/>
            <person name="Lampidis R."/>
            <person name="Kreft J."/>
            <person name="Goebel W."/>
            <person name="Chakraborty T."/>
        </authorList>
    </citation>
    <scope>NUCLEOTIDE SEQUENCE [LARGE SCALE GENOMIC DNA]</scope>
    <source>
        <strain>ATCC 35897 / DSM 20650 / CCUG 15529 / CIP 8149 / NCTC 11857 / SLCC 5334 / V8</strain>
    </source>
</reference>
<proteinExistence type="inferred from homology"/>
<name>RL36_LISW6</name>
<organism>
    <name type="scientific">Listeria welshimeri serovar 6b (strain ATCC 35897 / DSM 20650 / CCUG 15529 / CIP 8149 / NCTC 11857 / SLCC 5334 / V8)</name>
    <dbReference type="NCBI Taxonomy" id="386043"/>
    <lineage>
        <taxon>Bacteria</taxon>
        <taxon>Bacillati</taxon>
        <taxon>Bacillota</taxon>
        <taxon>Bacilli</taxon>
        <taxon>Bacillales</taxon>
        <taxon>Listeriaceae</taxon>
        <taxon>Listeria</taxon>
    </lineage>
</organism>
<keyword id="KW-0687">Ribonucleoprotein</keyword>
<keyword id="KW-0689">Ribosomal protein</keyword>
<protein>
    <recommendedName>
        <fullName evidence="1">Large ribosomal subunit protein bL36</fullName>
    </recommendedName>
    <alternativeName>
        <fullName evidence="2">50S ribosomal protein L36</fullName>
    </alternativeName>
</protein>
<dbReference type="EMBL" id="AM263198">
    <property type="protein sequence ID" value="CAK21977.1"/>
    <property type="molecule type" value="Genomic_DNA"/>
</dbReference>
<dbReference type="RefSeq" id="WP_003720928.1">
    <property type="nucleotide sequence ID" value="NC_008555.1"/>
</dbReference>
<dbReference type="SMR" id="A0ALU5"/>
<dbReference type="STRING" id="386043.lwe2559"/>
<dbReference type="GeneID" id="93240490"/>
<dbReference type="KEGG" id="lwe:lwe2559"/>
<dbReference type="eggNOG" id="COG0257">
    <property type="taxonomic scope" value="Bacteria"/>
</dbReference>
<dbReference type="HOGENOM" id="CLU_135723_6_2_9"/>
<dbReference type="OrthoDB" id="9802520at2"/>
<dbReference type="Proteomes" id="UP000000779">
    <property type="component" value="Chromosome"/>
</dbReference>
<dbReference type="GO" id="GO:0005737">
    <property type="term" value="C:cytoplasm"/>
    <property type="evidence" value="ECO:0007669"/>
    <property type="project" value="UniProtKB-ARBA"/>
</dbReference>
<dbReference type="GO" id="GO:1990904">
    <property type="term" value="C:ribonucleoprotein complex"/>
    <property type="evidence" value="ECO:0007669"/>
    <property type="project" value="UniProtKB-KW"/>
</dbReference>
<dbReference type="GO" id="GO:0005840">
    <property type="term" value="C:ribosome"/>
    <property type="evidence" value="ECO:0007669"/>
    <property type="project" value="UniProtKB-KW"/>
</dbReference>
<dbReference type="GO" id="GO:0003735">
    <property type="term" value="F:structural constituent of ribosome"/>
    <property type="evidence" value="ECO:0007669"/>
    <property type="project" value="InterPro"/>
</dbReference>
<dbReference type="GO" id="GO:0006412">
    <property type="term" value="P:translation"/>
    <property type="evidence" value="ECO:0007669"/>
    <property type="project" value="UniProtKB-UniRule"/>
</dbReference>
<dbReference type="HAMAP" id="MF_00251">
    <property type="entry name" value="Ribosomal_bL36"/>
    <property type="match status" value="1"/>
</dbReference>
<dbReference type="InterPro" id="IPR000473">
    <property type="entry name" value="Ribosomal_bL36"/>
</dbReference>
<dbReference type="InterPro" id="IPR035977">
    <property type="entry name" value="Ribosomal_bL36_sp"/>
</dbReference>
<dbReference type="NCBIfam" id="TIGR01022">
    <property type="entry name" value="rpmJ_bact"/>
    <property type="match status" value="1"/>
</dbReference>
<dbReference type="PANTHER" id="PTHR42888">
    <property type="entry name" value="50S RIBOSOMAL PROTEIN L36, CHLOROPLASTIC"/>
    <property type="match status" value="1"/>
</dbReference>
<dbReference type="PANTHER" id="PTHR42888:SF1">
    <property type="entry name" value="LARGE RIBOSOMAL SUBUNIT PROTEIN BL36C"/>
    <property type="match status" value="1"/>
</dbReference>
<dbReference type="Pfam" id="PF00444">
    <property type="entry name" value="Ribosomal_L36"/>
    <property type="match status" value="1"/>
</dbReference>
<dbReference type="SUPFAM" id="SSF57840">
    <property type="entry name" value="Ribosomal protein L36"/>
    <property type="match status" value="1"/>
</dbReference>
<dbReference type="PROSITE" id="PS00828">
    <property type="entry name" value="RIBOSOMAL_L36"/>
    <property type="match status" value="1"/>
</dbReference>
<gene>
    <name evidence="1" type="primary">rpmJ</name>
    <name type="ordered locus">lwe2559</name>
</gene>
<sequence length="37" mass="4323">MKVRPSVKPMCEKCKVIRRKGKVMVICENPKHKQKQG</sequence>
<comment type="similarity">
    <text evidence="1">Belongs to the bacterial ribosomal protein bL36 family.</text>
</comment>